<feature type="chain" id="PRO_0000057534" description="Beta-crystallin A1">
    <location>
        <begin position="1"/>
        <end position="198"/>
    </location>
</feature>
<feature type="domain" description="Beta/gamma crystallin 'Greek key' 1" evidence="3">
    <location>
        <begin position="14"/>
        <end position="53"/>
    </location>
</feature>
<feature type="domain" description="Beta/gamma crystallin 'Greek key' 2" evidence="3">
    <location>
        <begin position="54"/>
        <end position="100"/>
    </location>
</feature>
<feature type="domain" description="Beta/gamma crystallin 'Greek key' 3" evidence="3">
    <location>
        <begin position="107"/>
        <end position="148"/>
    </location>
</feature>
<feature type="domain" description="Beta/gamma crystallin 'Greek key' 4" evidence="3">
    <location>
        <begin position="149"/>
        <end position="197"/>
    </location>
</feature>
<feature type="region of interest" description="N-terminal arm">
    <location>
        <begin position="1"/>
        <end position="13"/>
    </location>
</feature>
<feature type="region of interest" description="Connecting peptide">
    <location>
        <begin position="101"/>
        <end position="106"/>
    </location>
</feature>
<feature type="modified residue" description="S-glutathionyl cysteine; alternate" evidence="1">
    <location>
        <position position="65"/>
    </location>
</feature>
<feature type="modified residue" description="S-methylcysteine; alternate" evidence="1">
    <location>
        <position position="65"/>
    </location>
</feature>
<feature type="modified residue" description="S-glutathionyl cysteine; alternate" evidence="1">
    <location>
        <position position="100"/>
    </location>
</feature>
<feature type="modified residue" description="S-methylcysteine; alternate" evidence="1">
    <location>
        <position position="100"/>
    </location>
</feature>
<feature type="sequence conflict" description="In Ref. 3; CAA24106/AAA51629." evidence="4" ref="3">
    <original>I</original>
    <variation>N</variation>
    <location>
        <position position="111"/>
    </location>
</feature>
<name>CRBA1_MOUSE</name>
<reference key="1">
    <citation type="journal article" date="2009" name="PLoS Biol.">
        <title>Lineage-specific biology revealed by a finished genome assembly of the mouse.</title>
        <authorList>
            <person name="Church D.M."/>
            <person name="Goodstadt L."/>
            <person name="Hillier L.W."/>
            <person name="Zody M.C."/>
            <person name="Goldstein S."/>
            <person name="She X."/>
            <person name="Bult C.J."/>
            <person name="Agarwala R."/>
            <person name="Cherry J.L."/>
            <person name="DiCuccio M."/>
            <person name="Hlavina W."/>
            <person name="Kapustin Y."/>
            <person name="Meric P."/>
            <person name="Maglott D."/>
            <person name="Birtle Z."/>
            <person name="Marques A.C."/>
            <person name="Graves T."/>
            <person name="Zhou S."/>
            <person name="Teague B."/>
            <person name="Potamousis K."/>
            <person name="Churas C."/>
            <person name="Place M."/>
            <person name="Herschleb J."/>
            <person name="Runnheim R."/>
            <person name="Forrest D."/>
            <person name="Amos-Landgraf J."/>
            <person name="Schwartz D.C."/>
            <person name="Cheng Z."/>
            <person name="Lindblad-Toh K."/>
            <person name="Eichler E.E."/>
            <person name="Ponting C.P."/>
        </authorList>
    </citation>
    <scope>NUCLEOTIDE SEQUENCE [LARGE SCALE GENOMIC DNA]</scope>
    <source>
        <strain>C57BL/6J</strain>
    </source>
</reference>
<reference key="2">
    <citation type="journal article" date="1983" name="Nature">
        <title>Gene and protein structure of a beta-crystallin polypeptide in murine lens: relationship of exons and structural motifs.</title>
        <authorList>
            <person name="Inana G."/>
            <person name="Piatigorsky J."/>
            <person name="Norman B."/>
            <person name="Slingsby C."/>
            <person name="Blundell T.L."/>
        </authorList>
    </citation>
    <scope>NUCLEOTIDE SEQUENCE [GENOMIC DNA] OF 1-55</scope>
</reference>
<reference key="3">
    <citation type="journal article" date="1982" name="J. Biol. Chem.">
        <title>Evolution and diversity of the crystallins. Nucleotide sequence of a beta-crystallin mRNA from the mouse lens.</title>
        <authorList>
            <person name="Inana G."/>
            <person name="Shinohara T."/>
            <person name="Maizel J.V. Jr."/>
            <person name="Piatigorsky J."/>
        </authorList>
    </citation>
    <scope>NUCLEOTIDE SEQUENCE [MRNA] OF 16-198</scope>
</reference>
<proteinExistence type="evidence at transcript level"/>
<evidence type="ECO:0000250" key="1"/>
<evidence type="ECO:0000250" key="2">
    <source>
        <dbReference type="UniProtKB" id="P05813"/>
    </source>
</evidence>
<evidence type="ECO:0000255" key="3">
    <source>
        <dbReference type="PROSITE-ProRule" id="PRU00028"/>
    </source>
</evidence>
<evidence type="ECO:0000305" key="4"/>
<evidence type="ECO:0000312" key="5">
    <source>
        <dbReference type="MGI" id="MGI:88518"/>
    </source>
</evidence>
<organism>
    <name type="scientific">Mus musculus</name>
    <name type="common">Mouse</name>
    <dbReference type="NCBI Taxonomy" id="10090"/>
    <lineage>
        <taxon>Eukaryota</taxon>
        <taxon>Metazoa</taxon>
        <taxon>Chordata</taxon>
        <taxon>Craniata</taxon>
        <taxon>Vertebrata</taxon>
        <taxon>Euteleostomi</taxon>
        <taxon>Mammalia</taxon>
        <taxon>Eutheria</taxon>
        <taxon>Euarchontoglires</taxon>
        <taxon>Glires</taxon>
        <taxon>Rodentia</taxon>
        <taxon>Myomorpha</taxon>
        <taxon>Muroidea</taxon>
        <taxon>Muridae</taxon>
        <taxon>Murinae</taxon>
        <taxon>Mus</taxon>
        <taxon>Mus</taxon>
    </lineage>
</organism>
<keyword id="KW-0273">Eye lens protein</keyword>
<keyword id="KW-0318">Glutathionylation</keyword>
<keyword id="KW-0488">Methylation</keyword>
<keyword id="KW-1185">Reference proteome</keyword>
<keyword id="KW-0677">Repeat</keyword>
<dbReference type="EMBL" id="AL591136">
    <property type="status" value="NOT_ANNOTATED_CDS"/>
    <property type="molecule type" value="Genomic_DNA"/>
</dbReference>
<dbReference type="EMBL" id="V00729">
    <property type="protein sequence ID" value="CAA24107.1"/>
    <property type="molecule type" value="Genomic_DNA"/>
</dbReference>
<dbReference type="EMBL" id="V00728">
    <property type="protein sequence ID" value="CAA24106.1"/>
    <property type="molecule type" value="mRNA"/>
</dbReference>
<dbReference type="EMBL" id="J00378">
    <property type="protein sequence ID" value="AAA51629.1"/>
    <property type="molecule type" value="mRNA"/>
</dbReference>
<dbReference type="PIR" id="A02927">
    <property type="entry name" value="CYMSB"/>
</dbReference>
<dbReference type="SMR" id="P02525"/>
<dbReference type="FunCoup" id="P02525">
    <property type="interactions" value="965"/>
</dbReference>
<dbReference type="STRING" id="10090.ENSMUSP00000077693"/>
<dbReference type="PhosphoSitePlus" id="P02525"/>
<dbReference type="PaxDb" id="10090-ENSMUSP00000077693"/>
<dbReference type="ProteomicsDB" id="284114"/>
<dbReference type="AGR" id="MGI:88518"/>
<dbReference type="MGI" id="MGI:88518">
    <property type="gene designation" value="Cryba1"/>
</dbReference>
<dbReference type="eggNOG" id="ENOG502QSM0">
    <property type="taxonomic scope" value="Eukaryota"/>
</dbReference>
<dbReference type="InParanoid" id="P02525"/>
<dbReference type="ChiTaRS" id="Cryba1">
    <property type="organism name" value="mouse"/>
</dbReference>
<dbReference type="PRO" id="PR:P02525"/>
<dbReference type="Proteomes" id="UP000000589">
    <property type="component" value="Unplaced"/>
</dbReference>
<dbReference type="RNAct" id="P02525">
    <property type="molecule type" value="protein"/>
</dbReference>
<dbReference type="GO" id="GO:0042802">
    <property type="term" value="F:identical protein binding"/>
    <property type="evidence" value="ECO:0000353"/>
    <property type="project" value="MGI"/>
</dbReference>
<dbReference type="GO" id="GO:0005212">
    <property type="term" value="F:structural constituent of eye lens"/>
    <property type="evidence" value="ECO:0000304"/>
    <property type="project" value="MGI"/>
</dbReference>
<dbReference type="GO" id="GO:0043010">
    <property type="term" value="P:camera-type eye development"/>
    <property type="evidence" value="ECO:0000315"/>
    <property type="project" value="MGI"/>
</dbReference>
<dbReference type="FunFam" id="2.60.20.10:FF:000004">
    <property type="entry name" value="Crystallin beta A4"/>
    <property type="match status" value="1"/>
</dbReference>
<dbReference type="FunFam" id="2.60.20.10:FF:000002">
    <property type="entry name" value="Crystallin, beta B2"/>
    <property type="match status" value="1"/>
</dbReference>
<dbReference type="Gene3D" id="2.60.20.10">
    <property type="entry name" value="Crystallins"/>
    <property type="match status" value="2"/>
</dbReference>
<dbReference type="InterPro" id="IPR050252">
    <property type="entry name" value="Beta/Gamma-Crystallin"/>
</dbReference>
<dbReference type="InterPro" id="IPR001064">
    <property type="entry name" value="Beta/gamma_crystallin"/>
</dbReference>
<dbReference type="InterPro" id="IPR011024">
    <property type="entry name" value="G_crystallin-like"/>
</dbReference>
<dbReference type="PANTHER" id="PTHR11818:SF8">
    <property type="entry name" value="BETA-CRYSTALLIN A3"/>
    <property type="match status" value="1"/>
</dbReference>
<dbReference type="PANTHER" id="PTHR11818">
    <property type="entry name" value="BETA/GAMMA CRYSTALLIN"/>
    <property type="match status" value="1"/>
</dbReference>
<dbReference type="Pfam" id="PF00030">
    <property type="entry name" value="Crystall"/>
    <property type="match status" value="2"/>
</dbReference>
<dbReference type="PRINTS" id="PR01367">
    <property type="entry name" value="BGCRYSTALLIN"/>
</dbReference>
<dbReference type="SMART" id="SM00247">
    <property type="entry name" value="XTALbg"/>
    <property type="match status" value="2"/>
</dbReference>
<dbReference type="SUPFAM" id="SSF49695">
    <property type="entry name" value="gamma-Crystallin-like"/>
    <property type="match status" value="1"/>
</dbReference>
<dbReference type="PROSITE" id="PS50915">
    <property type="entry name" value="CRYSTALLIN_BETA_GAMMA"/>
    <property type="match status" value="4"/>
</dbReference>
<comment type="function">
    <text>Crystallins are the dominant structural components of the vertebrate eye lens.</text>
</comment>
<comment type="subunit">
    <text evidence="1 2">Homo/heterodimer, or complexes of higher-order. The structure of beta-crystallin oligomers seems to be stabilized through interactions between the N-terminal arms (By similarity). Interacts with CRYBA1 (By similarity).</text>
</comment>
<comment type="domain">
    <text>Has a two-domain beta-structure, folded into four very similar Greek key motifs.</text>
</comment>
<comment type="similarity">
    <text evidence="4">Belongs to the beta/gamma-crystallin family.</text>
</comment>
<protein>
    <recommendedName>
        <fullName evidence="4">Beta-crystallin A1</fullName>
    </recommendedName>
    <alternativeName>
        <fullName>Beta-A1-crystallin</fullName>
    </alternativeName>
</protein>
<sequence>MLYLVLFLVPFNSIQITIYDQENFQGKRMEFTSSCPNVSERNFDNVRSLKVECGAWIGYEHTSFCGQQFILERGEYPRWDAWSGSNAYHIERLMSFRPICSANHKESKITIFEKENFIGRQWEICDDYPSLQAMGWFNNEVGSMKIQCGAWVCYQYPGYRGYQYILECDHHGGDYKHWPEWGSHAQTSQIQSIRRIQQ</sequence>
<accession>P02525</accession>
<gene>
    <name evidence="5" type="primary">Cryba1</name>
</gene>